<dbReference type="EMBL" id="CP001048">
    <property type="protein sequence ID" value="ACC90114.1"/>
    <property type="molecule type" value="Genomic_DNA"/>
</dbReference>
<dbReference type="RefSeq" id="WP_011192875.1">
    <property type="nucleotide sequence ID" value="NZ_CP009780.1"/>
</dbReference>
<dbReference type="SMR" id="B2JZ70"/>
<dbReference type="GeneID" id="49784941"/>
<dbReference type="KEGG" id="ypb:YPTS_3159"/>
<dbReference type="PATRIC" id="fig|502801.10.peg.2592"/>
<dbReference type="GO" id="GO:0005737">
    <property type="term" value="C:cytoplasm"/>
    <property type="evidence" value="ECO:0007669"/>
    <property type="project" value="UniProtKB-SubCell"/>
</dbReference>
<dbReference type="GO" id="GO:0003677">
    <property type="term" value="F:DNA binding"/>
    <property type="evidence" value="ECO:0007669"/>
    <property type="project" value="InterPro"/>
</dbReference>
<dbReference type="GO" id="GO:0004519">
    <property type="term" value="F:endonuclease activity"/>
    <property type="evidence" value="ECO:0007669"/>
    <property type="project" value="UniProtKB-UniRule"/>
</dbReference>
<dbReference type="GO" id="GO:0006304">
    <property type="term" value="P:DNA modification"/>
    <property type="evidence" value="ECO:0007669"/>
    <property type="project" value="InterPro"/>
</dbReference>
<dbReference type="GO" id="GO:0006298">
    <property type="term" value="P:mismatch repair"/>
    <property type="evidence" value="ECO:0007669"/>
    <property type="project" value="UniProtKB-UniRule"/>
</dbReference>
<dbReference type="CDD" id="cd00583">
    <property type="entry name" value="MutH-like"/>
    <property type="match status" value="1"/>
</dbReference>
<dbReference type="FunFam" id="3.40.600.10:FF:000001">
    <property type="entry name" value="DNA mismatch repair protein MutH"/>
    <property type="match status" value="1"/>
</dbReference>
<dbReference type="Gene3D" id="3.40.600.10">
    <property type="entry name" value="DNA mismatch repair MutH/Restriction endonuclease, type II"/>
    <property type="match status" value="1"/>
</dbReference>
<dbReference type="HAMAP" id="MF_00759">
    <property type="entry name" value="MutH"/>
    <property type="match status" value="1"/>
</dbReference>
<dbReference type="InterPro" id="IPR004230">
    <property type="entry name" value="DNA_mismatch_repair_MutH"/>
</dbReference>
<dbReference type="InterPro" id="IPR011337">
    <property type="entry name" value="DNA_rep_MutH/RE_typeII_Sau3AI"/>
</dbReference>
<dbReference type="InterPro" id="IPR037057">
    <property type="entry name" value="DNA_rep_MutH/T2_RE_sf"/>
</dbReference>
<dbReference type="InterPro" id="IPR011335">
    <property type="entry name" value="Restrct_endonuc-II-like"/>
</dbReference>
<dbReference type="NCBIfam" id="TIGR02248">
    <property type="entry name" value="mutH_TIGR"/>
    <property type="match status" value="1"/>
</dbReference>
<dbReference type="NCBIfam" id="NF003458">
    <property type="entry name" value="PRK05070.1"/>
    <property type="match status" value="1"/>
</dbReference>
<dbReference type="Pfam" id="PF02976">
    <property type="entry name" value="MutH"/>
    <property type="match status" value="1"/>
</dbReference>
<dbReference type="SMART" id="SM00927">
    <property type="entry name" value="MutH"/>
    <property type="match status" value="1"/>
</dbReference>
<dbReference type="SUPFAM" id="SSF52980">
    <property type="entry name" value="Restriction endonuclease-like"/>
    <property type="match status" value="1"/>
</dbReference>
<accession>B2JZ70</accession>
<comment type="function">
    <text evidence="1">Sequence-specific endonuclease that cleaves unmethylated GATC sequences. It is involved in DNA mismatch repair.</text>
</comment>
<comment type="subcellular location">
    <subcellularLocation>
        <location evidence="1">Cytoplasm</location>
    </subcellularLocation>
</comment>
<comment type="similarity">
    <text evidence="1">Belongs to the MutH family.</text>
</comment>
<name>MUTH_YERPB</name>
<organism>
    <name type="scientific">Yersinia pseudotuberculosis serotype IB (strain PB1/+)</name>
    <dbReference type="NCBI Taxonomy" id="502801"/>
    <lineage>
        <taxon>Bacteria</taxon>
        <taxon>Pseudomonadati</taxon>
        <taxon>Pseudomonadota</taxon>
        <taxon>Gammaproteobacteria</taxon>
        <taxon>Enterobacterales</taxon>
        <taxon>Yersiniaceae</taxon>
        <taxon>Yersinia</taxon>
    </lineage>
</organism>
<sequence length="228" mass="25359">MSVYSLPPAPPSDEHQLFQRAQALSGFTLGELATRAQWVIPADLKRVKGWVGMLLEFYLGASAGSKPEQDFADIGIELKTIPISAQGKPLETTFVCVAPLTGNSGVTWENSHVRHKLARVLWVPVEGERHIPLAERRVGAPLLWSPNVEEEELLRRDWEELMDLIVLGKVESITARHGQVLQLRPKAANSRALTEAIGEFGQPIMTLPRGFYLKKTLTAPMLARHFLL</sequence>
<protein>
    <recommendedName>
        <fullName evidence="1">DNA mismatch repair protein MutH</fullName>
    </recommendedName>
    <alternativeName>
        <fullName evidence="1">Methyl-directed mismatch repair protein</fullName>
    </alternativeName>
</protein>
<evidence type="ECO:0000255" key="1">
    <source>
        <dbReference type="HAMAP-Rule" id="MF_00759"/>
    </source>
</evidence>
<proteinExistence type="inferred from homology"/>
<feature type="chain" id="PRO_1000133479" description="DNA mismatch repair protein MutH">
    <location>
        <begin position="1"/>
        <end position="228"/>
    </location>
</feature>
<reference key="1">
    <citation type="submission" date="2008-04" db="EMBL/GenBank/DDBJ databases">
        <title>Complete sequence of Yersinia pseudotuberculosis PB1/+.</title>
        <authorList>
            <person name="Copeland A."/>
            <person name="Lucas S."/>
            <person name="Lapidus A."/>
            <person name="Glavina del Rio T."/>
            <person name="Dalin E."/>
            <person name="Tice H."/>
            <person name="Bruce D."/>
            <person name="Goodwin L."/>
            <person name="Pitluck S."/>
            <person name="Munk A.C."/>
            <person name="Brettin T."/>
            <person name="Detter J.C."/>
            <person name="Han C."/>
            <person name="Tapia R."/>
            <person name="Schmutz J."/>
            <person name="Larimer F."/>
            <person name="Land M."/>
            <person name="Hauser L."/>
            <person name="Challacombe J.F."/>
            <person name="Green L."/>
            <person name="Lindler L.E."/>
            <person name="Nikolich M.P."/>
            <person name="Richardson P."/>
        </authorList>
    </citation>
    <scope>NUCLEOTIDE SEQUENCE [LARGE SCALE GENOMIC DNA]</scope>
    <source>
        <strain>PB1/+</strain>
    </source>
</reference>
<gene>
    <name evidence="1" type="primary">mutH</name>
    <name type="ordered locus">YPTS_3159</name>
</gene>
<keyword id="KW-0963">Cytoplasm</keyword>
<keyword id="KW-0227">DNA damage</keyword>
<keyword id="KW-0234">DNA repair</keyword>
<keyword id="KW-0255">Endonuclease</keyword>
<keyword id="KW-0378">Hydrolase</keyword>
<keyword id="KW-0540">Nuclease</keyword>